<sequence length="123" mass="13728">MPTIQQLIRSKRQLVKSRTKSPALQGCPQRRGVCTRVYTTTPKKPNSALRKVARVKLTSGFEITAYIPGIGHNLQEHSVVLVRGGRVKDLPGVRYHIVRGTLDTVGVKDRKQGRSKYGVKKPK</sequence>
<protein>
    <recommendedName>
        <fullName evidence="4">Small ribosomal subunit protein uS12c</fullName>
    </recommendedName>
    <alternativeName>
        <fullName>30S ribosomal protein S12, chloroplastic</fullName>
    </alternativeName>
</protein>
<accession>Q85BW6</accession>
<keyword id="KW-0150">Chloroplast</keyword>
<keyword id="KW-0934">Plastid</keyword>
<keyword id="KW-0687">Ribonucleoprotein</keyword>
<keyword id="KW-0689">Ribosomal protein</keyword>
<keyword id="KW-0691">RNA editing</keyword>
<keyword id="KW-0694">RNA-binding</keyword>
<keyword id="KW-0699">rRNA-binding</keyword>
<gene>
    <name type="primary">rps12</name>
</gene>
<evidence type="ECO:0000250" key="1"/>
<evidence type="ECO:0000269" key="2">
    <source>
    </source>
</evidence>
<evidence type="ECO:0000269" key="3">
    <source>
    </source>
</evidence>
<evidence type="ECO:0000305" key="4"/>
<dbReference type="EMBL" id="AB086179">
    <property type="protein sequence ID" value="BAC55395.1"/>
    <property type="molecule type" value="Genomic_DNA"/>
</dbReference>
<dbReference type="EMBL" id="AB087460">
    <property type="protein sequence ID" value="BAC55469.1"/>
    <property type="molecule type" value="mRNA"/>
</dbReference>
<dbReference type="RefSeq" id="NP_777387.1">
    <property type="nucleotide sequence ID" value="NC_004543.1"/>
</dbReference>
<dbReference type="SMR" id="Q85BW6"/>
<dbReference type="GeneID" id="2553427"/>
<dbReference type="GO" id="GO:0009507">
    <property type="term" value="C:chloroplast"/>
    <property type="evidence" value="ECO:0007669"/>
    <property type="project" value="UniProtKB-SubCell"/>
</dbReference>
<dbReference type="GO" id="GO:0015935">
    <property type="term" value="C:small ribosomal subunit"/>
    <property type="evidence" value="ECO:0007669"/>
    <property type="project" value="InterPro"/>
</dbReference>
<dbReference type="GO" id="GO:0019843">
    <property type="term" value="F:rRNA binding"/>
    <property type="evidence" value="ECO:0007669"/>
    <property type="project" value="UniProtKB-UniRule"/>
</dbReference>
<dbReference type="GO" id="GO:0003735">
    <property type="term" value="F:structural constituent of ribosome"/>
    <property type="evidence" value="ECO:0007669"/>
    <property type="project" value="InterPro"/>
</dbReference>
<dbReference type="GO" id="GO:0006412">
    <property type="term" value="P:translation"/>
    <property type="evidence" value="ECO:0007669"/>
    <property type="project" value="UniProtKB-UniRule"/>
</dbReference>
<dbReference type="CDD" id="cd03368">
    <property type="entry name" value="Ribosomal_S12"/>
    <property type="match status" value="1"/>
</dbReference>
<dbReference type="FunFam" id="2.40.50.140:FF:000008">
    <property type="entry name" value="30S ribosomal protein S12, chloroplastic"/>
    <property type="match status" value="1"/>
</dbReference>
<dbReference type="Gene3D" id="2.40.50.140">
    <property type="entry name" value="Nucleic acid-binding proteins"/>
    <property type="match status" value="1"/>
</dbReference>
<dbReference type="HAMAP" id="MF_00403_B">
    <property type="entry name" value="Ribosomal_uS12_B"/>
    <property type="match status" value="1"/>
</dbReference>
<dbReference type="InterPro" id="IPR012340">
    <property type="entry name" value="NA-bd_OB-fold"/>
</dbReference>
<dbReference type="InterPro" id="IPR006032">
    <property type="entry name" value="Ribosomal_uS12"/>
</dbReference>
<dbReference type="InterPro" id="IPR005679">
    <property type="entry name" value="Ribosomal_uS12_bac"/>
</dbReference>
<dbReference type="NCBIfam" id="TIGR00981">
    <property type="entry name" value="rpsL_bact"/>
    <property type="match status" value="1"/>
</dbReference>
<dbReference type="PANTHER" id="PTHR11652">
    <property type="entry name" value="30S RIBOSOMAL PROTEIN S12 FAMILY MEMBER"/>
    <property type="match status" value="1"/>
</dbReference>
<dbReference type="Pfam" id="PF00164">
    <property type="entry name" value="Ribosom_S12_S23"/>
    <property type="match status" value="1"/>
</dbReference>
<dbReference type="PIRSF" id="PIRSF002133">
    <property type="entry name" value="Ribosomal_S12/S23"/>
    <property type="match status" value="1"/>
</dbReference>
<dbReference type="PRINTS" id="PR01034">
    <property type="entry name" value="RIBOSOMALS12"/>
</dbReference>
<dbReference type="SUPFAM" id="SSF50249">
    <property type="entry name" value="Nucleic acid-binding proteins"/>
    <property type="match status" value="1"/>
</dbReference>
<dbReference type="PROSITE" id="PS00055">
    <property type="entry name" value="RIBOSOMAL_S12"/>
    <property type="match status" value="1"/>
</dbReference>
<feature type="chain" id="PRO_0000146390" description="Small ribosomal subunit protein uS12c">
    <location>
        <begin position="1"/>
        <end position="123"/>
    </location>
</feature>
<geneLocation type="chloroplast"/>
<name>RR12_ANTAG</name>
<reference key="1">
    <citation type="journal article" date="2003" name="Nucleic Acids Res.">
        <title>The complete nucleotide sequence of the hornwort (Anthoceros formosae) chloroplast genome: insight into the earliest land plants.</title>
        <authorList>
            <person name="Kugita M."/>
            <person name="Kaneko A."/>
            <person name="Yamamoto Y."/>
            <person name="Takeya Y."/>
            <person name="Matsumoto T."/>
            <person name="Yoshinaga K."/>
        </authorList>
    </citation>
    <scope>NUCLEOTIDE SEQUENCE [LARGE SCALE GENOMIC DNA]</scope>
    <scope>RNA EDITING</scope>
</reference>
<reference key="2">
    <citation type="journal article" date="2003" name="Nucleic Acids Res.">
        <title>RNA editing in hornwort chloroplasts makes more than half the genes functional.</title>
        <authorList>
            <person name="Kugita M."/>
            <person name="Yamamoto Y."/>
            <person name="Fujikawa T."/>
            <person name="Matsumoto T."/>
            <person name="Yoshinaga K."/>
        </authorList>
    </citation>
    <scope>NUCLEOTIDE SEQUENCE [MRNA]</scope>
    <scope>RNA EDITING</scope>
    <source>
        <tissue>Thallus</tissue>
    </source>
</reference>
<proteinExistence type="evidence at transcript level"/>
<organism>
    <name type="scientific">Anthoceros angustus</name>
    <name type="common">Hornwort</name>
    <name type="synonym">Anthoceros formosae</name>
    <dbReference type="NCBI Taxonomy" id="48387"/>
    <lineage>
        <taxon>Eukaryota</taxon>
        <taxon>Viridiplantae</taxon>
        <taxon>Streptophyta</taxon>
        <taxon>Embryophyta</taxon>
        <taxon>Anthocerotophyta</taxon>
        <taxon>Anthocerotopsida</taxon>
        <taxon>Anthocerotidae</taxon>
        <taxon>Anthocerotales</taxon>
        <taxon>Anthocerotaceae</taxon>
        <taxon>Anthoceros</taxon>
    </lineage>
</organism>
<comment type="function">
    <text evidence="1">With S4 and S5 plays an important role in translational accuracy. Located at the interface of the 30S and 50S subunits (By similarity).</text>
</comment>
<comment type="subunit">
    <text>Part of the 30S ribosomal subunit.</text>
</comment>
<comment type="subcellular location">
    <subcellularLocation>
        <location>Plastid</location>
        <location>Chloroplast</location>
    </subcellularLocation>
</comment>
<comment type="RNA editing">
    <location>
        <position position="25" evidence="2 3"/>
    </location>
    <location>
        <position position="78" evidence="2 3"/>
    </location>
    <text>The nonsense codon at position 25 is modified to a sense codon.</text>
</comment>
<comment type="similarity">
    <text evidence="4">Belongs to the universal ribosomal protein uS12 family.</text>
</comment>